<evidence type="ECO:0000255" key="1">
    <source>
        <dbReference type="HAMAP-Rule" id="MF_00082"/>
    </source>
</evidence>
<feature type="chain" id="PRO_0000112665" description="Acetylglutamate kinase">
    <location>
        <begin position="1"/>
        <end position="256"/>
    </location>
</feature>
<feature type="binding site" evidence="1">
    <location>
        <begin position="40"/>
        <end position="41"/>
    </location>
    <ligand>
        <name>substrate</name>
    </ligand>
</feature>
<feature type="binding site" evidence="1">
    <location>
        <position position="62"/>
    </location>
    <ligand>
        <name>substrate</name>
    </ligand>
</feature>
<feature type="binding site" evidence="1">
    <location>
        <position position="154"/>
    </location>
    <ligand>
        <name>substrate</name>
    </ligand>
</feature>
<feature type="site" description="Transition state stabilizer" evidence="1">
    <location>
        <position position="7"/>
    </location>
</feature>
<feature type="site" description="Transition state stabilizer" evidence="1">
    <location>
        <position position="212"/>
    </location>
</feature>
<organism>
    <name type="scientific">Staphylococcus aureus (strain MRSA252)</name>
    <dbReference type="NCBI Taxonomy" id="282458"/>
    <lineage>
        <taxon>Bacteria</taxon>
        <taxon>Bacillati</taxon>
        <taxon>Bacillota</taxon>
        <taxon>Bacilli</taxon>
        <taxon>Bacillales</taxon>
        <taxon>Staphylococcaceae</taxon>
        <taxon>Staphylococcus</taxon>
    </lineage>
</organism>
<name>ARGB_STAAR</name>
<accession>Q6GKC4</accession>
<comment type="function">
    <text evidence="1">Catalyzes the ATP-dependent phosphorylation of N-acetyl-L-glutamate.</text>
</comment>
<comment type="catalytic activity">
    <reaction evidence="1">
        <text>N-acetyl-L-glutamate + ATP = N-acetyl-L-glutamyl 5-phosphate + ADP</text>
        <dbReference type="Rhea" id="RHEA:14629"/>
        <dbReference type="ChEBI" id="CHEBI:30616"/>
        <dbReference type="ChEBI" id="CHEBI:44337"/>
        <dbReference type="ChEBI" id="CHEBI:57936"/>
        <dbReference type="ChEBI" id="CHEBI:456216"/>
        <dbReference type="EC" id="2.7.2.8"/>
    </reaction>
</comment>
<comment type="pathway">
    <text evidence="1">Amino-acid biosynthesis; L-arginine biosynthesis; N(2)-acetyl-L-ornithine from L-glutamate: step 2/4.</text>
</comment>
<comment type="subcellular location">
    <subcellularLocation>
        <location evidence="1">Cytoplasm</location>
    </subcellularLocation>
</comment>
<comment type="similarity">
    <text evidence="1">Belongs to the acetylglutamate kinase family. ArgB subfamily.</text>
</comment>
<protein>
    <recommendedName>
        <fullName evidence="1">Acetylglutamate kinase</fullName>
        <ecNumber evidence="1">2.7.2.8</ecNumber>
    </recommendedName>
    <alternativeName>
        <fullName evidence="1">N-acetyl-L-glutamate 5-phosphotransferase</fullName>
    </alternativeName>
    <alternativeName>
        <fullName evidence="1">NAG kinase</fullName>
        <shortName evidence="1">NAGK</shortName>
    </alternativeName>
</protein>
<reference key="1">
    <citation type="journal article" date="2004" name="Proc. Natl. Acad. Sci. U.S.A.">
        <title>Complete genomes of two clinical Staphylococcus aureus strains: evidence for the rapid evolution of virulence and drug resistance.</title>
        <authorList>
            <person name="Holden M.T.G."/>
            <person name="Feil E.J."/>
            <person name="Lindsay J.A."/>
            <person name="Peacock S.J."/>
            <person name="Day N.P.J."/>
            <person name="Enright M.C."/>
            <person name="Foster T.J."/>
            <person name="Moore C.E."/>
            <person name="Hurst L."/>
            <person name="Atkin R."/>
            <person name="Barron A."/>
            <person name="Bason N."/>
            <person name="Bentley S.D."/>
            <person name="Chillingworth C."/>
            <person name="Chillingworth T."/>
            <person name="Churcher C."/>
            <person name="Clark L."/>
            <person name="Corton C."/>
            <person name="Cronin A."/>
            <person name="Doggett J."/>
            <person name="Dowd L."/>
            <person name="Feltwell T."/>
            <person name="Hance Z."/>
            <person name="Harris B."/>
            <person name="Hauser H."/>
            <person name="Holroyd S."/>
            <person name="Jagels K."/>
            <person name="James K.D."/>
            <person name="Lennard N."/>
            <person name="Line A."/>
            <person name="Mayes R."/>
            <person name="Moule S."/>
            <person name="Mungall K."/>
            <person name="Ormond D."/>
            <person name="Quail M.A."/>
            <person name="Rabbinowitsch E."/>
            <person name="Rutherford K.M."/>
            <person name="Sanders M."/>
            <person name="Sharp S."/>
            <person name="Simmonds M."/>
            <person name="Stevens K."/>
            <person name="Whitehead S."/>
            <person name="Barrell B.G."/>
            <person name="Spratt B.G."/>
            <person name="Parkhill J."/>
        </authorList>
    </citation>
    <scope>NUCLEOTIDE SEQUENCE [LARGE SCALE GENOMIC DNA]</scope>
    <source>
        <strain>MRSA252</strain>
    </source>
</reference>
<keyword id="KW-0028">Amino-acid biosynthesis</keyword>
<keyword id="KW-0055">Arginine biosynthesis</keyword>
<keyword id="KW-0067">ATP-binding</keyword>
<keyword id="KW-0963">Cytoplasm</keyword>
<keyword id="KW-0418">Kinase</keyword>
<keyword id="KW-0547">Nucleotide-binding</keyword>
<keyword id="KW-0808">Transferase</keyword>
<proteinExistence type="inferred from homology"/>
<sequence length="256" mass="27933">MKFIVIKIGGSTLSDMHPSIINNIKHLRSNNIYPIIVHGGGPFINEALSNQQIEPHFVNGLRVTDKATMTITKHTLIADVNTALVAQFNQQQCSAIGLCGLDAQLFEIKRFDQQYGYVGVPTTLNIDSLSYLCTKFVPIINSIGFNNHDGEFYNINADTLAYFIAASLEAPIYVLSNIAGVLINDVVIPQLPLADINQYIEHGDIYGGMIPKVLDAKNAIKNGCPKVIIASGNKPNIIEAIYNNDFVGTTILKSSV</sequence>
<gene>
    <name evidence="1" type="primary">argB</name>
    <name type="ordered locus">SAR0183</name>
</gene>
<dbReference type="EC" id="2.7.2.8" evidence="1"/>
<dbReference type="EMBL" id="BX571856">
    <property type="protein sequence ID" value="CAG39210.1"/>
    <property type="molecule type" value="Genomic_DNA"/>
</dbReference>
<dbReference type="RefSeq" id="WP_000668896.1">
    <property type="nucleotide sequence ID" value="NC_002952.2"/>
</dbReference>
<dbReference type="SMR" id="Q6GKC4"/>
<dbReference type="KEGG" id="sar:SAR0183"/>
<dbReference type="HOGENOM" id="CLU_053680_1_0_9"/>
<dbReference type="UniPathway" id="UPA00068">
    <property type="reaction ID" value="UER00107"/>
</dbReference>
<dbReference type="Proteomes" id="UP000000596">
    <property type="component" value="Chromosome"/>
</dbReference>
<dbReference type="GO" id="GO:0005737">
    <property type="term" value="C:cytoplasm"/>
    <property type="evidence" value="ECO:0007669"/>
    <property type="project" value="UniProtKB-SubCell"/>
</dbReference>
<dbReference type="GO" id="GO:0003991">
    <property type="term" value="F:acetylglutamate kinase activity"/>
    <property type="evidence" value="ECO:0007669"/>
    <property type="project" value="UniProtKB-UniRule"/>
</dbReference>
<dbReference type="GO" id="GO:0005524">
    <property type="term" value="F:ATP binding"/>
    <property type="evidence" value="ECO:0007669"/>
    <property type="project" value="UniProtKB-UniRule"/>
</dbReference>
<dbReference type="GO" id="GO:0042450">
    <property type="term" value="P:arginine biosynthetic process via ornithine"/>
    <property type="evidence" value="ECO:0007669"/>
    <property type="project" value="UniProtKB-UniRule"/>
</dbReference>
<dbReference type="GO" id="GO:0006526">
    <property type="term" value="P:L-arginine biosynthetic process"/>
    <property type="evidence" value="ECO:0007669"/>
    <property type="project" value="UniProtKB-UniPathway"/>
</dbReference>
<dbReference type="CDD" id="cd04238">
    <property type="entry name" value="AAK_NAGK-like"/>
    <property type="match status" value="1"/>
</dbReference>
<dbReference type="Gene3D" id="3.40.1160.10">
    <property type="entry name" value="Acetylglutamate kinase-like"/>
    <property type="match status" value="1"/>
</dbReference>
<dbReference type="HAMAP" id="MF_00082">
    <property type="entry name" value="ArgB"/>
    <property type="match status" value="1"/>
</dbReference>
<dbReference type="InterPro" id="IPR036393">
    <property type="entry name" value="AceGlu_kinase-like_sf"/>
</dbReference>
<dbReference type="InterPro" id="IPR004662">
    <property type="entry name" value="AcgluKinase_fam"/>
</dbReference>
<dbReference type="InterPro" id="IPR037528">
    <property type="entry name" value="ArgB"/>
</dbReference>
<dbReference type="InterPro" id="IPR001048">
    <property type="entry name" value="Asp/Glu/Uridylate_kinase"/>
</dbReference>
<dbReference type="NCBIfam" id="TIGR00761">
    <property type="entry name" value="argB"/>
    <property type="match status" value="1"/>
</dbReference>
<dbReference type="PANTHER" id="PTHR23342">
    <property type="entry name" value="N-ACETYLGLUTAMATE SYNTHASE"/>
    <property type="match status" value="1"/>
</dbReference>
<dbReference type="PANTHER" id="PTHR23342:SF0">
    <property type="entry name" value="N-ACETYLGLUTAMATE SYNTHASE, MITOCHONDRIAL"/>
    <property type="match status" value="1"/>
</dbReference>
<dbReference type="Pfam" id="PF00696">
    <property type="entry name" value="AA_kinase"/>
    <property type="match status" value="1"/>
</dbReference>
<dbReference type="PIRSF" id="PIRSF000728">
    <property type="entry name" value="NAGK"/>
    <property type="match status" value="1"/>
</dbReference>
<dbReference type="SUPFAM" id="SSF53633">
    <property type="entry name" value="Carbamate kinase-like"/>
    <property type="match status" value="1"/>
</dbReference>